<reference key="1">
    <citation type="submission" date="2007-12" db="EMBL/GenBank/DDBJ databases">
        <title>Complete sequence of chromosome of Francisella philomiragia subsp. philomiragia ATCC 25017.</title>
        <authorList>
            <consortium name="US DOE Joint Genome Institute"/>
            <person name="Copeland A."/>
            <person name="Lucas S."/>
            <person name="Lapidus A."/>
            <person name="Barry K."/>
            <person name="Detter J.C."/>
            <person name="Glavina del Rio T."/>
            <person name="Hammon N."/>
            <person name="Israni S."/>
            <person name="Dalin E."/>
            <person name="Tice H."/>
            <person name="Pitluck S."/>
            <person name="Chain P."/>
            <person name="Malfatti S."/>
            <person name="Shin M."/>
            <person name="Vergez L."/>
            <person name="Schmutz J."/>
            <person name="Larimer F."/>
            <person name="Land M."/>
            <person name="Hauser L."/>
            <person name="Richardson P."/>
        </authorList>
    </citation>
    <scope>NUCLEOTIDE SEQUENCE [LARGE SCALE GENOMIC DNA]</scope>
    <source>
        <strain>ATCC 25017 / CCUG 19701 / FSC 153 / O#319-036</strain>
    </source>
</reference>
<proteinExistence type="inferred from homology"/>
<name>RL5_FRAP2</name>
<organism>
    <name type="scientific">Francisella philomiragia subsp. philomiragia (strain ATCC 25017 / CCUG 19701 / FSC 153 / O#319-036)</name>
    <dbReference type="NCBI Taxonomy" id="484022"/>
    <lineage>
        <taxon>Bacteria</taxon>
        <taxon>Pseudomonadati</taxon>
        <taxon>Pseudomonadota</taxon>
        <taxon>Gammaproteobacteria</taxon>
        <taxon>Thiotrichales</taxon>
        <taxon>Francisellaceae</taxon>
        <taxon>Francisella</taxon>
    </lineage>
</organism>
<dbReference type="EMBL" id="CP000937">
    <property type="protein sequence ID" value="ABZ86793.1"/>
    <property type="molecule type" value="Genomic_DNA"/>
</dbReference>
<dbReference type="SMR" id="B0U0X7"/>
<dbReference type="KEGG" id="fph:Fphi_0575"/>
<dbReference type="eggNOG" id="COG0094">
    <property type="taxonomic scope" value="Bacteria"/>
</dbReference>
<dbReference type="HOGENOM" id="CLU_061015_2_1_6"/>
<dbReference type="GO" id="GO:1990904">
    <property type="term" value="C:ribonucleoprotein complex"/>
    <property type="evidence" value="ECO:0007669"/>
    <property type="project" value="UniProtKB-KW"/>
</dbReference>
<dbReference type="GO" id="GO:0005840">
    <property type="term" value="C:ribosome"/>
    <property type="evidence" value="ECO:0007669"/>
    <property type="project" value="UniProtKB-KW"/>
</dbReference>
<dbReference type="GO" id="GO:0019843">
    <property type="term" value="F:rRNA binding"/>
    <property type="evidence" value="ECO:0007669"/>
    <property type="project" value="UniProtKB-UniRule"/>
</dbReference>
<dbReference type="GO" id="GO:0003735">
    <property type="term" value="F:structural constituent of ribosome"/>
    <property type="evidence" value="ECO:0007669"/>
    <property type="project" value="InterPro"/>
</dbReference>
<dbReference type="GO" id="GO:0000049">
    <property type="term" value="F:tRNA binding"/>
    <property type="evidence" value="ECO:0007669"/>
    <property type="project" value="UniProtKB-UniRule"/>
</dbReference>
<dbReference type="GO" id="GO:0006412">
    <property type="term" value="P:translation"/>
    <property type="evidence" value="ECO:0007669"/>
    <property type="project" value="UniProtKB-UniRule"/>
</dbReference>
<dbReference type="FunFam" id="3.30.1440.10:FF:000001">
    <property type="entry name" value="50S ribosomal protein L5"/>
    <property type="match status" value="1"/>
</dbReference>
<dbReference type="Gene3D" id="3.30.1440.10">
    <property type="match status" value="1"/>
</dbReference>
<dbReference type="HAMAP" id="MF_01333_B">
    <property type="entry name" value="Ribosomal_uL5_B"/>
    <property type="match status" value="1"/>
</dbReference>
<dbReference type="InterPro" id="IPR002132">
    <property type="entry name" value="Ribosomal_uL5"/>
</dbReference>
<dbReference type="InterPro" id="IPR020930">
    <property type="entry name" value="Ribosomal_uL5_bac-type"/>
</dbReference>
<dbReference type="InterPro" id="IPR031309">
    <property type="entry name" value="Ribosomal_uL5_C"/>
</dbReference>
<dbReference type="InterPro" id="IPR020929">
    <property type="entry name" value="Ribosomal_uL5_CS"/>
</dbReference>
<dbReference type="InterPro" id="IPR022803">
    <property type="entry name" value="Ribosomal_uL5_dom_sf"/>
</dbReference>
<dbReference type="InterPro" id="IPR031310">
    <property type="entry name" value="Ribosomal_uL5_N"/>
</dbReference>
<dbReference type="NCBIfam" id="NF000585">
    <property type="entry name" value="PRK00010.1"/>
    <property type="match status" value="1"/>
</dbReference>
<dbReference type="PANTHER" id="PTHR11994">
    <property type="entry name" value="60S RIBOSOMAL PROTEIN L11-RELATED"/>
    <property type="match status" value="1"/>
</dbReference>
<dbReference type="Pfam" id="PF00281">
    <property type="entry name" value="Ribosomal_L5"/>
    <property type="match status" value="1"/>
</dbReference>
<dbReference type="Pfam" id="PF00673">
    <property type="entry name" value="Ribosomal_L5_C"/>
    <property type="match status" value="1"/>
</dbReference>
<dbReference type="PIRSF" id="PIRSF002161">
    <property type="entry name" value="Ribosomal_L5"/>
    <property type="match status" value="1"/>
</dbReference>
<dbReference type="SUPFAM" id="SSF55282">
    <property type="entry name" value="RL5-like"/>
    <property type="match status" value="1"/>
</dbReference>
<dbReference type="PROSITE" id="PS00358">
    <property type="entry name" value="RIBOSOMAL_L5"/>
    <property type="match status" value="1"/>
</dbReference>
<feature type="chain" id="PRO_1000086592" description="Large ribosomal subunit protein uL5">
    <location>
        <begin position="1"/>
        <end position="179"/>
    </location>
</feature>
<accession>B0U0X7</accession>
<protein>
    <recommendedName>
        <fullName evidence="1">Large ribosomal subunit protein uL5</fullName>
    </recommendedName>
    <alternativeName>
        <fullName evidence="2">50S ribosomal protein L5</fullName>
    </alternativeName>
</protein>
<keyword id="KW-0687">Ribonucleoprotein</keyword>
<keyword id="KW-0689">Ribosomal protein</keyword>
<keyword id="KW-0694">RNA-binding</keyword>
<keyword id="KW-0699">rRNA-binding</keyword>
<keyword id="KW-0820">tRNA-binding</keyword>
<evidence type="ECO:0000255" key="1">
    <source>
        <dbReference type="HAMAP-Rule" id="MF_01333"/>
    </source>
</evidence>
<evidence type="ECO:0000305" key="2"/>
<gene>
    <name evidence="1" type="primary">rplE</name>
    <name type="ordered locus">Fphi_0575</name>
</gene>
<sequence length="179" mass="20014">MARLKDYYQNEVVAKLKSELNLDNIMEVPAIKKITLNMGVGDAAKDKKIMTFALNDLTAIAGQKPVVTMSKKSIAGFKIRDGWPIGAKVTLRGERMYEFLDRLITIAIPRIRDFRGLSAKSFDGRGNYSLGMKEQISFPEIDYDKIDSIRGLDISITTTAKNDDQGRALLKAFGFPFKS</sequence>
<comment type="function">
    <text evidence="1">This is one of the proteins that bind and probably mediate the attachment of the 5S RNA into the large ribosomal subunit, where it forms part of the central protuberance. In the 70S ribosome it contacts protein S13 of the 30S subunit (bridge B1b), connecting the 2 subunits; this bridge is implicated in subunit movement. Contacts the P site tRNA; the 5S rRNA and some of its associated proteins might help stabilize positioning of ribosome-bound tRNAs.</text>
</comment>
<comment type="subunit">
    <text evidence="1">Part of the 50S ribosomal subunit; part of the 5S rRNA/L5/L18/L25 subcomplex. Contacts the 5S rRNA and the P site tRNA. Forms a bridge to the 30S subunit in the 70S ribosome.</text>
</comment>
<comment type="similarity">
    <text evidence="1">Belongs to the universal ribosomal protein uL5 family.</text>
</comment>